<sequence>MHKVVLLRHGESLWNMENRFTGWTDVDLSPKGIEEARESGKTLKAEGYTFDCAFTSVLKRAIRTLWIVLDELDRMWIPVYKSWRLNERHYGALQGLNKAETAKKYGEEQVKIWRRSVDVRPPALEKDDPRYPGFDPRYADLSEEEIPLTENLIDTINRVIPYWESTIAPTIKSGKKVLIVAHGNSLRGLVKYLDNLSKQEIMELNIPTGIPLVYELDDDLKPIRHYYLADEEKVKEKKELVENQGKIQGNS</sequence>
<evidence type="ECO:0000255" key="1">
    <source>
        <dbReference type="HAMAP-Rule" id="MF_01039"/>
    </source>
</evidence>
<dbReference type="EC" id="5.4.2.11" evidence="1"/>
<dbReference type="EMBL" id="CP000924">
    <property type="protein sequence ID" value="ABY93905.1"/>
    <property type="molecule type" value="Genomic_DNA"/>
</dbReference>
<dbReference type="RefSeq" id="WP_003868146.1">
    <property type="nucleotide sequence ID" value="NC_010321.1"/>
</dbReference>
<dbReference type="SMR" id="B0KBW9"/>
<dbReference type="STRING" id="340099.Teth39_0233"/>
<dbReference type="KEGG" id="tpd:Teth39_0233"/>
<dbReference type="eggNOG" id="COG0588">
    <property type="taxonomic scope" value="Bacteria"/>
</dbReference>
<dbReference type="HOGENOM" id="CLU_033323_1_1_9"/>
<dbReference type="UniPathway" id="UPA00109">
    <property type="reaction ID" value="UER00186"/>
</dbReference>
<dbReference type="Proteomes" id="UP000002156">
    <property type="component" value="Chromosome"/>
</dbReference>
<dbReference type="GO" id="GO:0004619">
    <property type="term" value="F:phosphoglycerate mutase activity"/>
    <property type="evidence" value="ECO:0007669"/>
    <property type="project" value="UniProtKB-EC"/>
</dbReference>
<dbReference type="GO" id="GO:0006094">
    <property type="term" value="P:gluconeogenesis"/>
    <property type="evidence" value="ECO:0007669"/>
    <property type="project" value="UniProtKB-UniRule"/>
</dbReference>
<dbReference type="GO" id="GO:0006096">
    <property type="term" value="P:glycolytic process"/>
    <property type="evidence" value="ECO:0007669"/>
    <property type="project" value="UniProtKB-UniRule"/>
</dbReference>
<dbReference type="CDD" id="cd07067">
    <property type="entry name" value="HP_PGM_like"/>
    <property type="match status" value="1"/>
</dbReference>
<dbReference type="FunFam" id="3.40.50.1240:FF:000003">
    <property type="entry name" value="2,3-bisphosphoglycerate-dependent phosphoglycerate mutase"/>
    <property type="match status" value="1"/>
</dbReference>
<dbReference type="Gene3D" id="3.40.50.1240">
    <property type="entry name" value="Phosphoglycerate mutase-like"/>
    <property type="match status" value="1"/>
</dbReference>
<dbReference type="HAMAP" id="MF_01039">
    <property type="entry name" value="PGAM_GpmA"/>
    <property type="match status" value="1"/>
</dbReference>
<dbReference type="InterPro" id="IPR013078">
    <property type="entry name" value="His_Pase_superF_clade-1"/>
</dbReference>
<dbReference type="InterPro" id="IPR029033">
    <property type="entry name" value="His_PPase_superfam"/>
</dbReference>
<dbReference type="InterPro" id="IPR001345">
    <property type="entry name" value="PG/BPGM_mutase_AS"/>
</dbReference>
<dbReference type="InterPro" id="IPR005952">
    <property type="entry name" value="Phosphogly_mut1"/>
</dbReference>
<dbReference type="NCBIfam" id="TIGR01258">
    <property type="entry name" value="pgm_1"/>
    <property type="match status" value="1"/>
</dbReference>
<dbReference type="NCBIfam" id="NF010713">
    <property type="entry name" value="PRK14115.1"/>
    <property type="match status" value="1"/>
</dbReference>
<dbReference type="PANTHER" id="PTHR11931">
    <property type="entry name" value="PHOSPHOGLYCERATE MUTASE"/>
    <property type="match status" value="1"/>
</dbReference>
<dbReference type="Pfam" id="PF00300">
    <property type="entry name" value="His_Phos_1"/>
    <property type="match status" value="1"/>
</dbReference>
<dbReference type="PIRSF" id="PIRSF000709">
    <property type="entry name" value="6PFK_2-Ptase"/>
    <property type="match status" value="1"/>
</dbReference>
<dbReference type="SMART" id="SM00855">
    <property type="entry name" value="PGAM"/>
    <property type="match status" value="1"/>
</dbReference>
<dbReference type="SUPFAM" id="SSF53254">
    <property type="entry name" value="Phosphoglycerate mutase-like"/>
    <property type="match status" value="1"/>
</dbReference>
<dbReference type="PROSITE" id="PS00175">
    <property type="entry name" value="PG_MUTASE"/>
    <property type="match status" value="1"/>
</dbReference>
<accession>B0KBW9</accession>
<protein>
    <recommendedName>
        <fullName evidence="1">2,3-bisphosphoglycerate-dependent phosphoglycerate mutase</fullName>
        <shortName evidence="1">BPG-dependent PGAM</shortName>
        <shortName evidence="1">PGAM</shortName>
        <shortName evidence="1">Phosphoglyceromutase</shortName>
        <shortName evidence="1">dPGM</shortName>
        <ecNumber evidence="1">5.4.2.11</ecNumber>
    </recommendedName>
</protein>
<reference key="1">
    <citation type="submission" date="2008-01" db="EMBL/GenBank/DDBJ databases">
        <title>Complete sequence of Thermoanaerobacter pseudethanolicus 39E.</title>
        <authorList>
            <person name="Copeland A."/>
            <person name="Lucas S."/>
            <person name="Lapidus A."/>
            <person name="Barry K."/>
            <person name="Glavina del Rio T."/>
            <person name="Dalin E."/>
            <person name="Tice H."/>
            <person name="Pitluck S."/>
            <person name="Bruce D."/>
            <person name="Goodwin L."/>
            <person name="Saunders E."/>
            <person name="Brettin T."/>
            <person name="Detter J.C."/>
            <person name="Han C."/>
            <person name="Schmutz J."/>
            <person name="Larimer F."/>
            <person name="Land M."/>
            <person name="Hauser L."/>
            <person name="Kyrpides N."/>
            <person name="Lykidis A."/>
            <person name="Hemme C."/>
            <person name="Fields M.W."/>
            <person name="He Z."/>
            <person name="Zhou J."/>
            <person name="Richardson P."/>
        </authorList>
    </citation>
    <scope>NUCLEOTIDE SEQUENCE [LARGE SCALE GENOMIC DNA]</scope>
    <source>
        <strain>ATCC 33223 / DSM 2355 / 39E</strain>
    </source>
</reference>
<organism>
    <name type="scientific">Thermoanaerobacter pseudethanolicus (strain ATCC 33223 / 39E)</name>
    <name type="common">Clostridium thermohydrosulfuricum</name>
    <dbReference type="NCBI Taxonomy" id="340099"/>
    <lineage>
        <taxon>Bacteria</taxon>
        <taxon>Bacillati</taxon>
        <taxon>Bacillota</taxon>
        <taxon>Clostridia</taxon>
        <taxon>Thermoanaerobacterales</taxon>
        <taxon>Thermoanaerobacteraceae</taxon>
        <taxon>Thermoanaerobacter</taxon>
    </lineage>
</organism>
<name>GPMA_THEP3</name>
<feature type="chain" id="PRO_1000135987" description="2,3-bisphosphoglycerate-dependent phosphoglycerate mutase">
    <location>
        <begin position="1"/>
        <end position="251"/>
    </location>
</feature>
<feature type="active site" description="Tele-phosphohistidine intermediate" evidence="1">
    <location>
        <position position="9"/>
    </location>
</feature>
<feature type="active site" description="Proton donor/acceptor" evidence="1">
    <location>
        <position position="87"/>
    </location>
</feature>
<feature type="binding site" evidence="1">
    <location>
        <begin position="8"/>
        <end position="15"/>
    </location>
    <ligand>
        <name>substrate</name>
    </ligand>
</feature>
<feature type="binding site" evidence="1">
    <location>
        <begin position="21"/>
        <end position="22"/>
    </location>
    <ligand>
        <name>substrate</name>
    </ligand>
</feature>
<feature type="binding site" evidence="1">
    <location>
        <position position="60"/>
    </location>
    <ligand>
        <name>substrate</name>
    </ligand>
</feature>
<feature type="binding site" evidence="1">
    <location>
        <begin position="87"/>
        <end position="90"/>
    </location>
    <ligand>
        <name>substrate</name>
    </ligand>
</feature>
<feature type="binding site" evidence="1">
    <location>
        <position position="98"/>
    </location>
    <ligand>
        <name>substrate</name>
    </ligand>
</feature>
<feature type="binding site" evidence="1">
    <location>
        <begin position="114"/>
        <end position="115"/>
    </location>
    <ligand>
        <name>substrate</name>
    </ligand>
</feature>
<feature type="binding site" evidence="1">
    <location>
        <begin position="183"/>
        <end position="184"/>
    </location>
    <ligand>
        <name>substrate</name>
    </ligand>
</feature>
<feature type="site" description="Transition state stabilizer" evidence="1">
    <location>
        <position position="182"/>
    </location>
</feature>
<keyword id="KW-0312">Gluconeogenesis</keyword>
<keyword id="KW-0324">Glycolysis</keyword>
<keyword id="KW-0413">Isomerase</keyword>
<keyword id="KW-1185">Reference proteome</keyword>
<proteinExistence type="inferred from homology"/>
<gene>
    <name evidence="1" type="primary">gpmA</name>
    <name type="ordered locus">Teth39_0233</name>
</gene>
<comment type="function">
    <text evidence="1">Catalyzes the interconversion of 2-phosphoglycerate and 3-phosphoglycerate.</text>
</comment>
<comment type="catalytic activity">
    <reaction evidence="1">
        <text>(2R)-2-phosphoglycerate = (2R)-3-phosphoglycerate</text>
        <dbReference type="Rhea" id="RHEA:15901"/>
        <dbReference type="ChEBI" id="CHEBI:58272"/>
        <dbReference type="ChEBI" id="CHEBI:58289"/>
        <dbReference type="EC" id="5.4.2.11"/>
    </reaction>
</comment>
<comment type="pathway">
    <text evidence="1">Carbohydrate degradation; glycolysis; pyruvate from D-glyceraldehyde 3-phosphate: step 3/5.</text>
</comment>
<comment type="similarity">
    <text evidence="1">Belongs to the phosphoglycerate mutase family. BPG-dependent PGAM subfamily.</text>
</comment>